<reference key="1">
    <citation type="journal article" date="2005" name="Infect. Immun.">
        <title>Comparative genomic analysis of Chlamydia trachomatis oculotropic and genitotropic strains.</title>
        <authorList>
            <person name="Carlson J.H."/>
            <person name="Porcella S.F."/>
            <person name="McClarty G."/>
            <person name="Caldwell H.D."/>
        </authorList>
    </citation>
    <scope>NUCLEOTIDE SEQUENCE [LARGE SCALE GENOMIC DNA]</scope>
    <source>
        <strain>ATCC VR-571B / DSM 19440 / HAR-13</strain>
    </source>
</reference>
<feature type="chain" id="PRO_0000227412" description="UvrABC system protein C">
    <location>
        <begin position="1"/>
        <end position="598"/>
    </location>
</feature>
<feature type="domain" description="GIY-YIG" evidence="1">
    <location>
        <begin position="13"/>
        <end position="92"/>
    </location>
</feature>
<feature type="domain" description="UVR" evidence="1">
    <location>
        <begin position="206"/>
        <end position="241"/>
    </location>
</feature>
<keyword id="KW-0963">Cytoplasm</keyword>
<keyword id="KW-0227">DNA damage</keyword>
<keyword id="KW-0228">DNA excision</keyword>
<keyword id="KW-0234">DNA repair</keyword>
<keyword id="KW-0267">Excision nuclease</keyword>
<keyword id="KW-0742">SOS response</keyword>
<organism>
    <name type="scientific">Chlamydia trachomatis serovar A (strain ATCC VR-571B / DSM 19440 / HAR-13)</name>
    <dbReference type="NCBI Taxonomy" id="315277"/>
    <lineage>
        <taxon>Bacteria</taxon>
        <taxon>Pseudomonadati</taxon>
        <taxon>Chlamydiota</taxon>
        <taxon>Chlamydiia</taxon>
        <taxon>Chlamydiales</taxon>
        <taxon>Chlamydiaceae</taxon>
        <taxon>Chlamydia/Chlamydophila group</taxon>
        <taxon>Chlamydia</taxon>
    </lineage>
</organism>
<protein>
    <recommendedName>
        <fullName evidence="1">UvrABC system protein C</fullName>
        <shortName evidence="1">Protein UvrC</shortName>
    </recommendedName>
    <alternativeName>
        <fullName evidence="1">Excinuclease ABC subunit C</fullName>
    </alternativeName>
</protein>
<sequence length="598" mass="68561">MRIEDFSLKDVSSSPGVYLMKDSQGTVLYVGKAKNLRNRLSSYLQKKGDSRKRIPFLMKKTTDIDTIVVSNETEAILLENNLIKKYQPRYNVLLKDDKTFFCLSVSLEHPWPRIEAIRTRALSPGKKKQWLFGPYVSAEACYALLEVISLWFPLRTCSDREFSTRQRPCVLYEMKRCLAPCVGLCSQTEYQETLDKAVLFLKGDVRSTISNLEKAIEKASQEQKFEHAAALYRTLTLIRQTMAKQHVEKFQAYDIDVLGLYRKGSLAIVSVLSVYSGKLLGARYFIFPENAQEDSALFSSFILQYYAENPRIPKEIFVPVSLDSPELPYLLNTAEPPKIRCPKTEYGKELLALAHKNAAEQAKPFNSITPPYEELQHFFNLSQYPYRIECYDNAHLQGEHNVGVCIVFENGLFSPKQYRTFSITSHGDDLAAFEEVLTRRFRSLTTELPNLIVIDGGRNQFKRAQRILEELNLTGITVVTIAKESGNHSKSLRQEKLFCETFPQGILLHPTSAILQFFQLLRDEAHRFAIQHYRKKHAKAVLTTKKIPGIGEVKTKRLLQKFKSWKRVFIASEEELKTVQGITAKDIQRIQEEGAKPE</sequence>
<evidence type="ECO:0000255" key="1">
    <source>
        <dbReference type="HAMAP-Rule" id="MF_00203"/>
    </source>
</evidence>
<dbReference type="EMBL" id="CP000051">
    <property type="protein sequence ID" value="AAX51071.1"/>
    <property type="molecule type" value="Genomic_DNA"/>
</dbReference>
<dbReference type="RefSeq" id="WP_010725346.1">
    <property type="nucleotide sequence ID" value="NC_007429.1"/>
</dbReference>
<dbReference type="SMR" id="Q3KKQ1"/>
<dbReference type="KEGG" id="cta:CTA_0861"/>
<dbReference type="HOGENOM" id="CLU_014841_3_2_0"/>
<dbReference type="Proteomes" id="UP000002532">
    <property type="component" value="Chromosome"/>
</dbReference>
<dbReference type="GO" id="GO:0005737">
    <property type="term" value="C:cytoplasm"/>
    <property type="evidence" value="ECO:0007669"/>
    <property type="project" value="UniProtKB-SubCell"/>
</dbReference>
<dbReference type="GO" id="GO:0009380">
    <property type="term" value="C:excinuclease repair complex"/>
    <property type="evidence" value="ECO:0007669"/>
    <property type="project" value="InterPro"/>
</dbReference>
<dbReference type="GO" id="GO:0003677">
    <property type="term" value="F:DNA binding"/>
    <property type="evidence" value="ECO:0007669"/>
    <property type="project" value="UniProtKB-UniRule"/>
</dbReference>
<dbReference type="GO" id="GO:0009381">
    <property type="term" value="F:excinuclease ABC activity"/>
    <property type="evidence" value="ECO:0007669"/>
    <property type="project" value="UniProtKB-UniRule"/>
</dbReference>
<dbReference type="GO" id="GO:0006289">
    <property type="term" value="P:nucleotide-excision repair"/>
    <property type="evidence" value="ECO:0007669"/>
    <property type="project" value="UniProtKB-UniRule"/>
</dbReference>
<dbReference type="GO" id="GO:0009432">
    <property type="term" value="P:SOS response"/>
    <property type="evidence" value="ECO:0007669"/>
    <property type="project" value="UniProtKB-UniRule"/>
</dbReference>
<dbReference type="CDD" id="cd10434">
    <property type="entry name" value="GIY-YIG_UvrC_Cho"/>
    <property type="match status" value="1"/>
</dbReference>
<dbReference type="FunFam" id="3.40.1440.10:FF:000001">
    <property type="entry name" value="UvrABC system protein C"/>
    <property type="match status" value="1"/>
</dbReference>
<dbReference type="Gene3D" id="1.10.150.20">
    <property type="entry name" value="5' to 3' exonuclease, C-terminal subdomain"/>
    <property type="match status" value="1"/>
</dbReference>
<dbReference type="Gene3D" id="3.40.1440.10">
    <property type="entry name" value="GIY-YIG endonuclease"/>
    <property type="match status" value="1"/>
</dbReference>
<dbReference type="Gene3D" id="3.30.420.340">
    <property type="entry name" value="UvrC, RNAse H endonuclease domain"/>
    <property type="match status" value="1"/>
</dbReference>
<dbReference type="HAMAP" id="MF_00203">
    <property type="entry name" value="UvrC"/>
    <property type="match status" value="1"/>
</dbReference>
<dbReference type="InterPro" id="IPR000305">
    <property type="entry name" value="GIY-YIG_endonuc"/>
</dbReference>
<dbReference type="InterPro" id="IPR035901">
    <property type="entry name" value="GIY-YIG_endonuc_sf"/>
</dbReference>
<dbReference type="InterPro" id="IPR047296">
    <property type="entry name" value="GIY-YIG_UvrC_Cho"/>
</dbReference>
<dbReference type="InterPro" id="IPR010994">
    <property type="entry name" value="RuvA_2-like"/>
</dbReference>
<dbReference type="InterPro" id="IPR001943">
    <property type="entry name" value="UVR_dom"/>
</dbReference>
<dbReference type="InterPro" id="IPR036876">
    <property type="entry name" value="UVR_dom_sf"/>
</dbReference>
<dbReference type="InterPro" id="IPR050066">
    <property type="entry name" value="UvrABC_protein_C"/>
</dbReference>
<dbReference type="InterPro" id="IPR004791">
    <property type="entry name" value="UvrC"/>
</dbReference>
<dbReference type="InterPro" id="IPR001162">
    <property type="entry name" value="UvrC_RNase_H_dom"/>
</dbReference>
<dbReference type="InterPro" id="IPR038476">
    <property type="entry name" value="UvrC_RNase_H_dom_sf"/>
</dbReference>
<dbReference type="NCBIfam" id="TIGR00194">
    <property type="entry name" value="uvrC"/>
    <property type="match status" value="1"/>
</dbReference>
<dbReference type="PANTHER" id="PTHR30562:SF1">
    <property type="entry name" value="UVRABC SYSTEM PROTEIN C"/>
    <property type="match status" value="1"/>
</dbReference>
<dbReference type="PANTHER" id="PTHR30562">
    <property type="entry name" value="UVRC/OXIDOREDUCTASE"/>
    <property type="match status" value="1"/>
</dbReference>
<dbReference type="Pfam" id="PF01541">
    <property type="entry name" value="GIY-YIG"/>
    <property type="match status" value="1"/>
</dbReference>
<dbReference type="Pfam" id="PF14520">
    <property type="entry name" value="HHH_5"/>
    <property type="match status" value="1"/>
</dbReference>
<dbReference type="Pfam" id="PF22920">
    <property type="entry name" value="UvrC_RNaseH"/>
    <property type="match status" value="1"/>
</dbReference>
<dbReference type="Pfam" id="PF08459">
    <property type="entry name" value="UvrC_RNaseH_dom"/>
    <property type="match status" value="1"/>
</dbReference>
<dbReference type="SMART" id="SM00465">
    <property type="entry name" value="GIYc"/>
    <property type="match status" value="1"/>
</dbReference>
<dbReference type="SUPFAM" id="SSF46600">
    <property type="entry name" value="C-terminal UvrC-binding domain of UvrB"/>
    <property type="match status" value="1"/>
</dbReference>
<dbReference type="SUPFAM" id="SSF82771">
    <property type="entry name" value="GIY-YIG endonuclease"/>
    <property type="match status" value="1"/>
</dbReference>
<dbReference type="SUPFAM" id="SSF47781">
    <property type="entry name" value="RuvA domain 2-like"/>
    <property type="match status" value="1"/>
</dbReference>
<dbReference type="PROSITE" id="PS50164">
    <property type="entry name" value="GIY_YIG"/>
    <property type="match status" value="1"/>
</dbReference>
<dbReference type="PROSITE" id="PS50151">
    <property type="entry name" value="UVR"/>
    <property type="match status" value="1"/>
</dbReference>
<dbReference type="PROSITE" id="PS50165">
    <property type="entry name" value="UVRC"/>
    <property type="match status" value="1"/>
</dbReference>
<gene>
    <name evidence="1" type="primary">uvrC</name>
    <name type="ordered locus">CTA_0861</name>
</gene>
<proteinExistence type="inferred from homology"/>
<accession>Q3KKQ1</accession>
<name>UVRC_CHLTA</name>
<comment type="function">
    <text evidence="1">The UvrABC repair system catalyzes the recognition and processing of DNA lesions. UvrC both incises the 5' and 3' sides of the lesion. The N-terminal half is responsible for the 3' incision and the C-terminal half is responsible for the 5' incision.</text>
</comment>
<comment type="subunit">
    <text evidence="1">Interacts with UvrB in an incision complex.</text>
</comment>
<comment type="subcellular location">
    <subcellularLocation>
        <location evidence="1">Cytoplasm</location>
    </subcellularLocation>
</comment>
<comment type="similarity">
    <text evidence="1">Belongs to the UvrC family.</text>
</comment>